<gene>
    <name evidence="1" type="primary">atpE</name>
    <name evidence="1" type="synonym">atpH</name>
    <name type="ordered locus">ssl2615</name>
</gene>
<organism>
    <name type="scientific">Synechocystis sp. (strain ATCC 27184 / PCC 6803 / Kazusa)</name>
    <dbReference type="NCBI Taxonomy" id="1111708"/>
    <lineage>
        <taxon>Bacteria</taxon>
        <taxon>Bacillati</taxon>
        <taxon>Cyanobacteriota</taxon>
        <taxon>Cyanophyceae</taxon>
        <taxon>Synechococcales</taxon>
        <taxon>Merismopediaceae</taxon>
        <taxon>Synechocystis</taxon>
    </lineage>
</organism>
<feature type="chain" id="PRO_0000112173" description="ATP synthase subunit c">
    <location>
        <begin position="1"/>
        <end position="81"/>
    </location>
</feature>
<feature type="transmembrane region" description="Helical" evidence="1">
    <location>
        <begin position="6"/>
        <end position="26"/>
    </location>
</feature>
<feature type="transmembrane region" description="Helical" evidence="1">
    <location>
        <begin position="57"/>
        <end position="77"/>
    </location>
</feature>
<feature type="site" description="Reversibly protonated during proton transport" evidence="1">
    <location>
        <position position="61"/>
    </location>
</feature>
<dbReference type="EMBL" id="X58128">
    <property type="protein sequence ID" value="CAA41131.1"/>
    <property type="molecule type" value="Genomic_DNA"/>
</dbReference>
<dbReference type="EMBL" id="BA000022">
    <property type="protein sequence ID" value="BAA16739.1"/>
    <property type="molecule type" value="Genomic_DNA"/>
</dbReference>
<dbReference type="PIR" id="S17747">
    <property type="entry name" value="PWYBLB"/>
</dbReference>
<dbReference type="SMR" id="P27182"/>
<dbReference type="FunCoup" id="P27182">
    <property type="interactions" value="373"/>
</dbReference>
<dbReference type="IntAct" id="P27182">
    <property type="interactions" value="4"/>
</dbReference>
<dbReference type="STRING" id="1148.gene:10497594"/>
<dbReference type="PaxDb" id="1148-1651812"/>
<dbReference type="EnsemblBacteria" id="BAA16739">
    <property type="protein sequence ID" value="BAA16739"/>
    <property type="gene ID" value="BAA16739"/>
</dbReference>
<dbReference type="KEGG" id="syn:ssl2615"/>
<dbReference type="eggNOG" id="COG0636">
    <property type="taxonomic scope" value="Bacteria"/>
</dbReference>
<dbReference type="InParanoid" id="P27182"/>
<dbReference type="PhylomeDB" id="P27182"/>
<dbReference type="Proteomes" id="UP000001425">
    <property type="component" value="Chromosome"/>
</dbReference>
<dbReference type="GO" id="GO:0031676">
    <property type="term" value="C:plasma membrane-derived thylakoid membrane"/>
    <property type="evidence" value="ECO:0007669"/>
    <property type="project" value="UniProtKB-SubCell"/>
</dbReference>
<dbReference type="GO" id="GO:0045259">
    <property type="term" value="C:proton-transporting ATP synthase complex"/>
    <property type="evidence" value="ECO:0007669"/>
    <property type="project" value="UniProtKB-KW"/>
</dbReference>
<dbReference type="GO" id="GO:0033177">
    <property type="term" value="C:proton-transporting two-sector ATPase complex, proton-transporting domain"/>
    <property type="evidence" value="ECO:0007669"/>
    <property type="project" value="InterPro"/>
</dbReference>
<dbReference type="GO" id="GO:0008289">
    <property type="term" value="F:lipid binding"/>
    <property type="evidence" value="ECO:0007669"/>
    <property type="project" value="UniProtKB-KW"/>
</dbReference>
<dbReference type="GO" id="GO:0046933">
    <property type="term" value="F:proton-transporting ATP synthase activity, rotational mechanism"/>
    <property type="evidence" value="ECO:0007669"/>
    <property type="project" value="UniProtKB-UniRule"/>
</dbReference>
<dbReference type="GO" id="GO:0015986">
    <property type="term" value="P:proton motive force-driven ATP synthesis"/>
    <property type="evidence" value="ECO:0000318"/>
    <property type="project" value="GO_Central"/>
</dbReference>
<dbReference type="CDD" id="cd18183">
    <property type="entry name" value="ATP-synt_Fo_c_ATPH"/>
    <property type="match status" value="1"/>
</dbReference>
<dbReference type="FunFam" id="1.20.20.10:FF:000001">
    <property type="entry name" value="ATP synthase subunit c, chloroplastic"/>
    <property type="match status" value="1"/>
</dbReference>
<dbReference type="Gene3D" id="1.20.20.10">
    <property type="entry name" value="F1F0 ATP synthase subunit C"/>
    <property type="match status" value="1"/>
</dbReference>
<dbReference type="HAMAP" id="MF_01396">
    <property type="entry name" value="ATP_synth_c_bact"/>
    <property type="match status" value="1"/>
</dbReference>
<dbReference type="InterPro" id="IPR005953">
    <property type="entry name" value="ATP_synth_csu_bac/chlpt"/>
</dbReference>
<dbReference type="InterPro" id="IPR000454">
    <property type="entry name" value="ATP_synth_F0_csu"/>
</dbReference>
<dbReference type="InterPro" id="IPR020537">
    <property type="entry name" value="ATP_synth_F0_csu_DDCD_BS"/>
</dbReference>
<dbReference type="InterPro" id="IPR038662">
    <property type="entry name" value="ATP_synth_F0_csu_sf"/>
</dbReference>
<dbReference type="InterPro" id="IPR002379">
    <property type="entry name" value="ATPase_proteolipid_c-like_dom"/>
</dbReference>
<dbReference type="InterPro" id="IPR035921">
    <property type="entry name" value="F/V-ATP_Csub_sf"/>
</dbReference>
<dbReference type="NCBIfam" id="TIGR01260">
    <property type="entry name" value="ATP_synt_c"/>
    <property type="match status" value="1"/>
</dbReference>
<dbReference type="NCBIfam" id="NF005608">
    <property type="entry name" value="PRK07354.1"/>
    <property type="match status" value="1"/>
</dbReference>
<dbReference type="PANTHER" id="PTHR10031">
    <property type="entry name" value="ATP SYNTHASE LIPID-BINDING PROTEIN, MITOCHONDRIAL"/>
    <property type="match status" value="1"/>
</dbReference>
<dbReference type="PANTHER" id="PTHR10031:SF0">
    <property type="entry name" value="ATPASE PROTEIN 9"/>
    <property type="match status" value="1"/>
</dbReference>
<dbReference type="Pfam" id="PF00137">
    <property type="entry name" value="ATP-synt_C"/>
    <property type="match status" value="1"/>
</dbReference>
<dbReference type="PRINTS" id="PR00124">
    <property type="entry name" value="ATPASEC"/>
</dbReference>
<dbReference type="SUPFAM" id="SSF81333">
    <property type="entry name" value="F1F0 ATP synthase subunit C"/>
    <property type="match status" value="1"/>
</dbReference>
<dbReference type="PROSITE" id="PS00605">
    <property type="entry name" value="ATPASE_C"/>
    <property type="match status" value="1"/>
</dbReference>
<evidence type="ECO:0000255" key="1">
    <source>
        <dbReference type="HAMAP-Rule" id="MF_01396"/>
    </source>
</evidence>
<proteinExistence type="inferred from homology"/>
<comment type="function">
    <text evidence="1">F(1)F(0) ATP synthase produces ATP from ADP in the presence of a proton or sodium gradient. F-type ATPases consist of two structural domains, F(1) containing the extramembraneous catalytic core and F(0) containing the membrane proton channel, linked together by a central stalk and a peripheral stalk. During catalysis, ATP synthesis in the catalytic domain of F(1) is coupled via a rotary mechanism of the central stalk subunits to proton translocation.</text>
</comment>
<comment type="function">
    <text evidence="1">Key component of the F(0) channel; it plays a direct role in translocation across the membrane. A homomeric c-ring of between 10-14 subunits forms the central stalk rotor element with the F(1) delta and epsilon subunits.</text>
</comment>
<comment type="subunit">
    <text evidence="1">F-type ATPases have 2 components, F(1) - the catalytic core - and F(0) - the membrane proton channel. F(1) has five subunits: alpha(3), beta(3), gamma(1), delta(1), epsilon(1). F(0) has four main subunits: a(1), b(1), b'(1) and c(10-14). The alpha and beta chains form an alternating ring which encloses part of the gamma chain. F(1) is attached to F(0) by a central stalk formed by the gamma and epsilon chains, while a peripheral stalk is formed by the delta, b and b' chains.</text>
</comment>
<comment type="subcellular location">
    <subcellularLocation>
        <location evidence="1">Cellular thylakoid membrane</location>
        <topology evidence="1">Multi-pass membrane protein</topology>
    </subcellularLocation>
</comment>
<comment type="similarity">
    <text evidence="1">Belongs to the ATPase C chain family.</text>
</comment>
<reference key="1">
    <citation type="journal article" date="1991" name="Plant Mol. Biol.">
        <title>The atp1 and atp2 operons of the cyanobacterium Synechocystis sp. PCC 6803.</title>
        <authorList>
            <person name="Lill H."/>
            <person name="Nelson N."/>
        </authorList>
    </citation>
    <scope>NUCLEOTIDE SEQUENCE [GENOMIC DNA]</scope>
</reference>
<reference key="2">
    <citation type="journal article" date="1996" name="DNA Res.">
        <title>Sequence analysis of the genome of the unicellular cyanobacterium Synechocystis sp. strain PCC6803. II. Sequence determination of the entire genome and assignment of potential protein-coding regions.</title>
        <authorList>
            <person name="Kaneko T."/>
            <person name="Sato S."/>
            <person name="Kotani H."/>
            <person name="Tanaka A."/>
            <person name="Asamizu E."/>
            <person name="Nakamura Y."/>
            <person name="Miyajima N."/>
            <person name="Hirosawa M."/>
            <person name="Sugiura M."/>
            <person name="Sasamoto S."/>
            <person name="Kimura T."/>
            <person name="Hosouchi T."/>
            <person name="Matsuno A."/>
            <person name="Muraki A."/>
            <person name="Nakazaki N."/>
            <person name="Naruo K."/>
            <person name="Okumura S."/>
            <person name="Shimpo S."/>
            <person name="Takeuchi C."/>
            <person name="Wada T."/>
            <person name="Watanabe A."/>
            <person name="Yamada M."/>
            <person name="Yasuda M."/>
            <person name="Tabata S."/>
        </authorList>
    </citation>
    <scope>NUCLEOTIDE SEQUENCE [LARGE SCALE GENOMIC DNA]</scope>
    <source>
        <strain>ATCC 27184 / PCC 6803 / Kazusa</strain>
    </source>
</reference>
<name>ATPL_SYNY3</name>
<accession>P27182</accession>
<keyword id="KW-0066">ATP synthesis</keyword>
<keyword id="KW-0138">CF(0)</keyword>
<keyword id="KW-0375">Hydrogen ion transport</keyword>
<keyword id="KW-0406">Ion transport</keyword>
<keyword id="KW-0446">Lipid-binding</keyword>
<keyword id="KW-0472">Membrane</keyword>
<keyword id="KW-1185">Reference proteome</keyword>
<keyword id="KW-0793">Thylakoid</keyword>
<keyword id="KW-0812">Transmembrane</keyword>
<keyword id="KW-1133">Transmembrane helix</keyword>
<keyword id="KW-0813">Transport</keyword>
<sequence length="81" mass="7968">MDSTVAAASVIAAALAVGLGAIGPGIGQGNASGQAVSGIARQPEAEGKIRGTLLLTLAFMESLTIYGLVIALVLLFANPFA</sequence>
<protein>
    <recommendedName>
        <fullName evidence="1">ATP synthase subunit c</fullName>
    </recommendedName>
    <alternativeName>
        <fullName evidence="1">ATP synthase F(0) sector subunit c</fullName>
    </alternativeName>
    <alternativeName>
        <fullName evidence="1">F-type ATPase subunit c</fullName>
        <shortName evidence="1">F-ATPase subunit c</shortName>
    </alternativeName>
    <alternativeName>
        <fullName evidence="1">Lipid-binding protein</fullName>
    </alternativeName>
</protein>